<accession>Q8LPQ3</accession>
<accession>F4J211</accession>
<accession>Q9SVL5</accession>
<name>Y3084_ARATH</name>
<sequence>MANSKKQAWFFYTTGLPSDIEIEVDDITFHLHKFPLMSKSKKLHQLITEQEQSKVYSHIKLENFPGGSEIFEMVIKISYGFKVDISVSTAVPLRCAAEYLEMTEEYSPENLISKTEKFLSEFVFTNVQESIKALKACESVSSLAESLCITEQCIDSIVFQASSTDPSSFYGWPINNGGIFTVDRKKQSKDSKTELWFEDLTELSFPIFRRVILSMKSSVLSPEIVERSLLTYAKKHIPGISRSSSASSSSSSSSTTIASENQQRELLETITSDLPLTATTTRSLFGLLRAAIILNASENCRKFLEKKIGSNLEKATLDDLLIPSYSYLNETLYDIDLVERLLRRFLENVAVSSSSLTVVGRLIDGVLGEIASDANLKPEQFYNLAVLLPVQARVYDDGLYRAVDIYFKTHSWILEEEKEKICSVMDCRKLTVEGCTHAAQNERLPLRAVVQVLFLEQLQLRQVITGTLLTEEDGDKTVVDLGRWKEAVKENQVLRLDMDTMRTRVNQLEKECLYLKKVIAKIDKESLLKAKHGAGKWSIGKKFGCKFSAQVCDSQEATMVDRRSRRFLS</sequence>
<keyword id="KW-0597">Phosphoprotein</keyword>
<keyword id="KW-1185">Reference proteome</keyword>
<keyword id="KW-0833">Ubl conjugation pathway</keyword>
<dbReference type="EMBL" id="AL049862">
    <property type="protein sequence ID" value="CAB42913.1"/>
    <property type="status" value="ALT_SEQ"/>
    <property type="molecule type" value="Genomic_DNA"/>
</dbReference>
<dbReference type="EMBL" id="CP002686">
    <property type="protein sequence ID" value="AEE78716.1"/>
    <property type="molecule type" value="Genomic_DNA"/>
</dbReference>
<dbReference type="EMBL" id="AY094473">
    <property type="protein sequence ID" value="AAM19841.1"/>
    <property type="molecule type" value="mRNA"/>
</dbReference>
<dbReference type="EMBL" id="BT004531">
    <property type="protein sequence ID" value="AAO42777.1"/>
    <property type="molecule type" value="mRNA"/>
</dbReference>
<dbReference type="PIR" id="T08405">
    <property type="entry name" value="T08405"/>
</dbReference>
<dbReference type="RefSeq" id="NP_190653.2">
    <property type="nucleotide sequence ID" value="NM_114944.6"/>
</dbReference>
<dbReference type="SMR" id="Q8LPQ3"/>
<dbReference type="iPTMnet" id="Q8LPQ3"/>
<dbReference type="PaxDb" id="3702-AT3G50840.1"/>
<dbReference type="ProteomicsDB" id="234600"/>
<dbReference type="EnsemblPlants" id="AT3G50840.1">
    <property type="protein sequence ID" value="AT3G50840.1"/>
    <property type="gene ID" value="AT3G50840"/>
</dbReference>
<dbReference type="GeneID" id="824248"/>
<dbReference type="Gramene" id="AT3G50840.1">
    <property type="protein sequence ID" value="AT3G50840.1"/>
    <property type="gene ID" value="AT3G50840"/>
</dbReference>
<dbReference type="KEGG" id="ath:AT3G50840"/>
<dbReference type="Araport" id="AT3G50840"/>
<dbReference type="TAIR" id="AT3G50840"/>
<dbReference type="eggNOG" id="ENOG502QUA3">
    <property type="taxonomic scope" value="Eukaryota"/>
</dbReference>
<dbReference type="HOGENOM" id="CLU_005994_6_2_1"/>
<dbReference type="InParanoid" id="Q8LPQ3"/>
<dbReference type="OMA" id="CDSHEAK"/>
<dbReference type="OrthoDB" id="624345at2759"/>
<dbReference type="UniPathway" id="UPA00143"/>
<dbReference type="PRO" id="PR:Q8LPQ3"/>
<dbReference type="Proteomes" id="UP000006548">
    <property type="component" value="Chromosome 3"/>
</dbReference>
<dbReference type="ExpressionAtlas" id="Q8LPQ3">
    <property type="expression patterns" value="baseline and differential"/>
</dbReference>
<dbReference type="GO" id="GO:0016567">
    <property type="term" value="P:protein ubiquitination"/>
    <property type="evidence" value="ECO:0007669"/>
    <property type="project" value="UniProtKB-UniPathway"/>
</dbReference>
<dbReference type="Gene3D" id="3.30.710.10">
    <property type="entry name" value="Potassium Channel Kv1.1, Chain A"/>
    <property type="match status" value="1"/>
</dbReference>
<dbReference type="InterPro" id="IPR000210">
    <property type="entry name" value="BTB/POZ_dom"/>
</dbReference>
<dbReference type="InterPro" id="IPR043454">
    <property type="entry name" value="NPH3/RPT2-like"/>
</dbReference>
<dbReference type="InterPro" id="IPR027356">
    <property type="entry name" value="NPH3_dom"/>
</dbReference>
<dbReference type="InterPro" id="IPR011333">
    <property type="entry name" value="SKP1/BTB/POZ_sf"/>
</dbReference>
<dbReference type="PANTHER" id="PTHR32370">
    <property type="entry name" value="OS12G0117600 PROTEIN"/>
    <property type="match status" value="1"/>
</dbReference>
<dbReference type="Pfam" id="PF00651">
    <property type="entry name" value="BTB"/>
    <property type="match status" value="1"/>
</dbReference>
<dbReference type="Pfam" id="PF03000">
    <property type="entry name" value="NPH3"/>
    <property type="match status" value="1"/>
</dbReference>
<dbReference type="SMART" id="SM00225">
    <property type="entry name" value="BTB"/>
    <property type="match status" value="1"/>
</dbReference>
<dbReference type="SUPFAM" id="SSF54695">
    <property type="entry name" value="POZ domain"/>
    <property type="match status" value="1"/>
</dbReference>
<dbReference type="PROSITE" id="PS50097">
    <property type="entry name" value="BTB"/>
    <property type="match status" value="1"/>
</dbReference>
<dbReference type="PROSITE" id="PS51649">
    <property type="entry name" value="NPH3"/>
    <property type="match status" value="1"/>
</dbReference>
<feature type="chain" id="PRO_0000409581" description="BTB/POZ domain-containing protein At3g50840">
    <location>
        <begin position="1"/>
        <end position="569"/>
    </location>
</feature>
<feature type="domain" description="BTB" evidence="3">
    <location>
        <begin position="18"/>
        <end position="87"/>
    </location>
</feature>
<feature type="domain" description="NPH3" evidence="4">
    <location>
        <begin position="194"/>
        <end position="459"/>
    </location>
</feature>
<feature type="region of interest" description="Disordered" evidence="5">
    <location>
        <begin position="240"/>
        <end position="261"/>
    </location>
</feature>
<feature type="compositionally biased region" description="Low complexity" evidence="5">
    <location>
        <begin position="240"/>
        <end position="259"/>
    </location>
</feature>
<feature type="modified residue" description="Phosphotyrosine" evidence="2">
    <location>
        <position position="400"/>
    </location>
</feature>
<feature type="sequence conflict" description="In Ref. 3; AAM19841/AAO42777." evidence="7" ref="3">
    <original>D</original>
    <variation>G</variation>
    <location>
        <position position="553"/>
    </location>
</feature>
<proteinExistence type="evidence at transcript level"/>
<organism>
    <name type="scientific">Arabidopsis thaliana</name>
    <name type="common">Mouse-ear cress</name>
    <dbReference type="NCBI Taxonomy" id="3702"/>
    <lineage>
        <taxon>Eukaryota</taxon>
        <taxon>Viridiplantae</taxon>
        <taxon>Streptophyta</taxon>
        <taxon>Embryophyta</taxon>
        <taxon>Tracheophyta</taxon>
        <taxon>Spermatophyta</taxon>
        <taxon>Magnoliopsida</taxon>
        <taxon>eudicotyledons</taxon>
        <taxon>Gunneridae</taxon>
        <taxon>Pentapetalae</taxon>
        <taxon>rosids</taxon>
        <taxon>malvids</taxon>
        <taxon>Brassicales</taxon>
        <taxon>Brassicaceae</taxon>
        <taxon>Camelineae</taxon>
        <taxon>Arabidopsis</taxon>
    </lineage>
</organism>
<comment type="function">
    <text evidence="1">May act as a substrate-specific adapter of an E3 ubiquitin-protein ligase complex (CUL3-RBX1-BTB) which mediates the ubiquitination and subsequent proteasomal degradation of target proteins.</text>
</comment>
<comment type="pathway">
    <text>Protein modification; protein ubiquitination.</text>
</comment>
<comment type="domain">
    <text evidence="6">The BTB/POZ domain mediates the interaction with some component of ubiquitin ligase complexes.</text>
</comment>
<comment type="similarity">
    <text evidence="4">Belongs to the NPH3 family.</text>
</comment>
<comment type="sequence caution" evidence="7">
    <conflict type="erroneous gene model prediction">
        <sequence resource="EMBL-CDS" id="CAB42913"/>
    </conflict>
</comment>
<protein>
    <recommendedName>
        <fullName>BTB/POZ domain-containing protein At3g50840</fullName>
    </recommendedName>
</protein>
<gene>
    <name type="ordered locus">At3g50840</name>
    <name type="ORF">F18B3_120</name>
</gene>
<evidence type="ECO:0000250" key="1"/>
<evidence type="ECO:0000250" key="2">
    <source>
        <dbReference type="UniProtKB" id="Q9FMF5"/>
    </source>
</evidence>
<evidence type="ECO:0000255" key="3">
    <source>
        <dbReference type="PROSITE-ProRule" id="PRU00037"/>
    </source>
</evidence>
<evidence type="ECO:0000255" key="4">
    <source>
        <dbReference type="PROSITE-ProRule" id="PRU00982"/>
    </source>
</evidence>
<evidence type="ECO:0000256" key="5">
    <source>
        <dbReference type="SAM" id="MobiDB-lite"/>
    </source>
</evidence>
<evidence type="ECO:0000269" key="6">
    <source>
    </source>
</evidence>
<evidence type="ECO:0000305" key="7"/>
<reference key="1">
    <citation type="journal article" date="2000" name="Nature">
        <title>Sequence and analysis of chromosome 3 of the plant Arabidopsis thaliana.</title>
        <authorList>
            <person name="Salanoubat M."/>
            <person name="Lemcke K."/>
            <person name="Rieger M."/>
            <person name="Ansorge W."/>
            <person name="Unseld M."/>
            <person name="Fartmann B."/>
            <person name="Valle G."/>
            <person name="Bloecker H."/>
            <person name="Perez-Alonso M."/>
            <person name="Obermaier B."/>
            <person name="Delseny M."/>
            <person name="Boutry M."/>
            <person name="Grivell L.A."/>
            <person name="Mache R."/>
            <person name="Puigdomenech P."/>
            <person name="De Simone V."/>
            <person name="Choisne N."/>
            <person name="Artiguenave F."/>
            <person name="Robert C."/>
            <person name="Brottier P."/>
            <person name="Wincker P."/>
            <person name="Cattolico L."/>
            <person name="Weissenbach J."/>
            <person name="Saurin W."/>
            <person name="Quetier F."/>
            <person name="Schaefer M."/>
            <person name="Mueller-Auer S."/>
            <person name="Gabel C."/>
            <person name="Fuchs M."/>
            <person name="Benes V."/>
            <person name="Wurmbach E."/>
            <person name="Drzonek H."/>
            <person name="Erfle H."/>
            <person name="Jordan N."/>
            <person name="Bangert S."/>
            <person name="Wiedelmann R."/>
            <person name="Kranz H."/>
            <person name="Voss H."/>
            <person name="Holland R."/>
            <person name="Brandt P."/>
            <person name="Nyakatura G."/>
            <person name="Vezzi A."/>
            <person name="D'Angelo M."/>
            <person name="Pallavicini A."/>
            <person name="Toppo S."/>
            <person name="Simionati B."/>
            <person name="Conrad A."/>
            <person name="Hornischer K."/>
            <person name="Kauer G."/>
            <person name="Loehnert T.-H."/>
            <person name="Nordsiek G."/>
            <person name="Reichelt J."/>
            <person name="Scharfe M."/>
            <person name="Schoen O."/>
            <person name="Bargues M."/>
            <person name="Terol J."/>
            <person name="Climent J."/>
            <person name="Navarro P."/>
            <person name="Collado C."/>
            <person name="Perez-Perez A."/>
            <person name="Ottenwaelder B."/>
            <person name="Duchemin D."/>
            <person name="Cooke R."/>
            <person name="Laudie M."/>
            <person name="Berger-Llauro C."/>
            <person name="Purnelle B."/>
            <person name="Masuy D."/>
            <person name="de Haan M."/>
            <person name="Maarse A.C."/>
            <person name="Alcaraz J.-P."/>
            <person name="Cottet A."/>
            <person name="Casacuberta E."/>
            <person name="Monfort A."/>
            <person name="Argiriou A."/>
            <person name="Flores M."/>
            <person name="Liguori R."/>
            <person name="Vitale D."/>
            <person name="Mannhaupt G."/>
            <person name="Haase D."/>
            <person name="Schoof H."/>
            <person name="Rudd S."/>
            <person name="Zaccaria P."/>
            <person name="Mewes H.-W."/>
            <person name="Mayer K.F.X."/>
            <person name="Kaul S."/>
            <person name="Town C.D."/>
            <person name="Koo H.L."/>
            <person name="Tallon L.J."/>
            <person name="Jenkins J."/>
            <person name="Rooney T."/>
            <person name="Rizzo M."/>
            <person name="Walts A."/>
            <person name="Utterback T."/>
            <person name="Fujii C.Y."/>
            <person name="Shea T.P."/>
            <person name="Creasy T.H."/>
            <person name="Haas B."/>
            <person name="Maiti R."/>
            <person name="Wu D."/>
            <person name="Peterson J."/>
            <person name="Van Aken S."/>
            <person name="Pai G."/>
            <person name="Militscher J."/>
            <person name="Sellers P."/>
            <person name="Gill J.E."/>
            <person name="Feldblyum T.V."/>
            <person name="Preuss D."/>
            <person name="Lin X."/>
            <person name="Nierman W.C."/>
            <person name="Salzberg S.L."/>
            <person name="White O."/>
            <person name="Venter J.C."/>
            <person name="Fraser C.M."/>
            <person name="Kaneko T."/>
            <person name="Nakamura Y."/>
            <person name="Sato S."/>
            <person name="Kato T."/>
            <person name="Asamizu E."/>
            <person name="Sasamoto S."/>
            <person name="Kimura T."/>
            <person name="Idesawa K."/>
            <person name="Kawashima K."/>
            <person name="Kishida Y."/>
            <person name="Kiyokawa C."/>
            <person name="Kohara M."/>
            <person name="Matsumoto M."/>
            <person name="Matsuno A."/>
            <person name="Muraki A."/>
            <person name="Nakayama S."/>
            <person name="Nakazaki N."/>
            <person name="Shinpo S."/>
            <person name="Takeuchi C."/>
            <person name="Wada T."/>
            <person name="Watanabe A."/>
            <person name="Yamada M."/>
            <person name="Yasuda M."/>
            <person name="Tabata S."/>
        </authorList>
    </citation>
    <scope>NUCLEOTIDE SEQUENCE [LARGE SCALE GENOMIC DNA]</scope>
    <source>
        <strain>cv. Columbia</strain>
    </source>
</reference>
<reference key="2">
    <citation type="journal article" date="2017" name="Plant J.">
        <title>Araport11: a complete reannotation of the Arabidopsis thaliana reference genome.</title>
        <authorList>
            <person name="Cheng C.Y."/>
            <person name="Krishnakumar V."/>
            <person name="Chan A.P."/>
            <person name="Thibaud-Nissen F."/>
            <person name="Schobel S."/>
            <person name="Town C.D."/>
        </authorList>
    </citation>
    <scope>GENOME REANNOTATION</scope>
    <source>
        <strain>cv. Columbia</strain>
    </source>
</reference>
<reference key="3">
    <citation type="journal article" date="2003" name="Science">
        <title>Empirical analysis of transcriptional activity in the Arabidopsis genome.</title>
        <authorList>
            <person name="Yamada K."/>
            <person name="Lim J."/>
            <person name="Dale J.M."/>
            <person name="Chen H."/>
            <person name="Shinn P."/>
            <person name="Palm C.J."/>
            <person name="Southwick A.M."/>
            <person name="Wu H.C."/>
            <person name="Kim C.J."/>
            <person name="Nguyen M."/>
            <person name="Pham P.K."/>
            <person name="Cheuk R.F."/>
            <person name="Karlin-Newmann G."/>
            <person name="Liu S.X."/>
            <person name="Lam B."/>
            <person name="Sakano H."/>
            <person name="Wu T."/>
            <person name="Yu G."/>
            <person name="Miranda M."/>
            <person name="Quach H.L."/>
            <person name="Tripp M."/>
            <person name="Chang C.H."/>
            <person name="Lee J.M."/>
            <person name="Toriumi M.J."/>
            <person name="Chan M.M."/>
            <person name="Tang C.C."/>
            <person name="Onodera C.S."/>
            <person name="Deng J.M."/>
            <person name="Akiyama K."/>
            <person name="Ansari Y."/>
            <person name="Arakawa T."/>
            <person name="Banh J."/>
            <person name="Banno F."/>
            <person name="Bowser L."/>
            <person name="Brooks S.Y."/>
            <person name="Carninci P."/>
            <person name="Chao Q."/>
            <person name="Choy N."/>
            <person name="Enju A."/>
            <person name="Goldsmith A.D."/>
            <person name="Gurjal M."/>
            <person name="Hansen N.F."/>
            <person name="Hayashizaki Y."/>
            <person name="Johnson-Hopson C."/>
            <person name="Hsuan V.W."/>
            <person name="Iida K."/>
            <person name="Karnes M."/>
            <person name="Khan S."/>
            <person name="Koesema E."/>
            <person name="Ishida J."/>
            <person name="Jiang P.X."/>
            <person name="Jones T."/>
            <person name="Kawai J."/>
            <person name="Kamiya A."/>
            <person name="Meyers C."/>
            <person name="Nakajima M."/>
            <person name="Narusaka M."/>
            <person name="Seki M."/>
            <person name="Sakurai T."/>
            <person name="Satou M."/>
            <person name="Tamse R."/>
            <person name="Vaysberg M."/>
            <person name="Wallender E.K."/>
            <person name="Wong C."/>
            <person name="Yamamura Y."/>
            <person name="Yuan S."/>
            <person name="Shinozaki K."/>
            <person name="Davis R.W."/>
            <person name="Theologis A."/>
            <person name="Ecker J.R."/>
        </authorList>
    </citation>
    <scope>NUCLEOTIDE SEQUENCE [LARGE SCALE MRNA]</scope>
    <source>
        <strain>cv. Columbia</strain>
    </source>
</reference>
<reference key="4">
    <citation type="journal article" date="2005" name="J. Biol. Chem.">
        <title>Cullins 3a and 3b assemble with members of the broad complex/tramtrack/bric-a-brac (BTB) protein family to form essential ubiquitin-protein ligases (E3s) in Arabidopsis.</title>
        <authorList>
            <person name="Gingerich D.J."/>
            <person name="Gagne J.M."/>
            <person name="Salter D.W."/>
            <person name="Hellmann H."/>
            <person name="Estelle M."/>
            <person name="Ma L."/>
            <person name="Vierstra R.D."/>
        </authorList>
    </citation>
    <scope>DOMAIN BTB</scope>
</reference>